<reference key="1">
    <citation type="journal article" date="2007" name="Proc. Natl. Acad. Sci. U.S.A.">
        <title>Deep-sea vent epsilon-proteobacterial genomes provide insights into emergence of pathogens.</title>
        <authorList>
            <person name="Nakagawa S."/>
            <person name="Takaki Y."/>
            <person name="Shimamura S."/>
            <person name="Reysenbach A.-L."/>
            <person name="Takai K."/>
            <person name="Horikoshi K."/>
        </authorList>
    </citation>
    <scope>NUCLEOTIDE SEQUENCE [LARGE SCALE GENOMIC DNA]</scope>
    <source>
        <strain>NBC37-1</strain>
    </source>
</reference>
<proteinExistence type="inferred from homology"/>
<evidence type="ECO:0000255" key="1">
    <source>
        <dbReference type="HAMAP-Rule" id="MF_01368"/>
    </source>
</evidence>
<evidence type="ECO:0000305" key="2"/>
<gene>
    <name evidence="1" type="primary">rplQ</name>
    <name type="ordered locus">SUN_2348</name>
</gene>
<keyword id="KW-0687">Ribonucleoprotein</keyword>
<keyword id="KW-0689">Ribosomal protein</keyword>
<protein>
    <recommendedName>
        <fullName evidence="1">Large ribosomal subunit protein bL17</fullName>
    </recommendedName>
    <alternativeName>
        <fullName evidence="2">50S ribosomal protein L17</fullName>
    </alternativeName>
</protein>
<accession>A6QCS5</accession>
<feature type="chain" id="PRO_1000055974" description="Large ribosomal subunit protein bL17">
    <location>
        <begin position="1"/>
        <end position="116"/>
    </location>
</feature>
<comment type="subunit">
    <text evidence="1">Part of the 50S ribosomal subunit. Contacts protein L32.</text>
</comment>
<comment type="similarity">
    <text evidence="1">Belongs to the bacterial ribosomal protein bL17 family.</text>
</comment>
<name>RL17_SULNB</name>
<dbReference type="EMBL" id="AP009179">
    <property type="protein sequence ID" value="BAF73284.1"/>
    <property type="molecule type" value="Genomic_DNA"/>
</dbReference>
<dbReference type="RefSeq" id="WP_012084123.1">
    <property type="nucleotide sequence ID" value="NC_009663.1"/>
</dbReference>
<dbReference type="SMR" id="A6QCS5"/>
<dbReference type="STRING" id="387093.SUN_2348"/>
<dbReference type="KEGG" id="sun:SUN_2348"/>
<dbReference type="eggNOG" id="COG0203">
    <property type="taxonomic scope" value="Bacteria"/>
</dbReference>
<dbReference type="HOGENOM" id="CLU_074407_2_0_7"/>
<dbReference type="OrthoDB" id="9809073at2"/>
<dbReference type="Proteomes" id="UP000006378">
    <property type="component" value="Chromosome"/>
</dbReference>
<dbReference type="GO" id="GO:0022625">
    <property type="term" value="C:cytosolic large ribosomal subunit"/>
    <property type="evidence" value="ECO:0007669"/>
    <property type="project" value="TreeGrafter"/>
</dbReference>
<dbReference type="GO" id="GO:0003735">
    <property type="term" value="F:structural constituent of ribosome"/>
    <property type="evidence" value="ECO:0007669"/>
    <property type="project" value="InterPro"/>
</dbReference>
<dbReference type="GO" id="GO:0006412">
    <property type="term" value="P:translation"/>
    <property type="evidence" value="ECO:0007669"/>
    <property type="project" value="UniProtKB-UniRule"/>
</dbReference>
<dbReference type="Gene3D" id="3.90.1030.10">
    <property type="entry name" value="Ribosomal protein L17"/>
    <property type="match status" value="1"/>
</dbReference>
<dbReference type="HAMAP" id="MF_01368">
    <property type="entry name" value="Ribosomal_bL17"/>
    <property type="match status" value="1"/>
</dbReference>
<dbReference type="InterPro" id="IPR000456">
    <property type="entry name" value="Ribosomal_bL17"/>
</dbReference>
<dbReference type="InterPro" id="IPR036373">
    <property type="entry name" value="Ribosomal_bL17_sf"/>
</dbReference>
<dbReference type="NCBIfam" id="TIGR00059">
    <property type="entry name" value="L17"/>
    <property type="match status" value="1"/>
</dbReference>
<dbReference type="PANTHER" id="PTHR14413:SF16">
    <property type="entry name" value="LARGE RIBOSOMAL SUBUNIT PROTEIN BL17M"/>
    <property type="match status" value="1"/>
</dbReference>
<dbReference type="PANTHER" id="PTHR14413">
    <property type="entry name" value="RIBOSOMAL PROTEIN L17"/>
    <property type="match status" value="1"/>
</dbReference>
<dbReference type="Pfam" id="PF01196">
    <property type="entry name" value="Ribosomal_L17"/>
    <property type="match status" value="1"/>
</dbReference>
<dbReference type="SUPFAM" id="SSF64263">
    <property type="entry name" value="Prokaryotic ribosomal protein L17"/>
    <property type="match status" value="1"/>
</dbReference>
<organism>
    <name type="scientific">Sulfurovum sp. (strain NBC37-1)</name>
    <dbReference type="NCBI Taxonomy" id="387093"/>
    <lineage>
        <taxon>Bacteria</taxon>
        <taxon>Pseudomonadati</taxon>
        <taxon>Campylobacterota</taxon>
        <taxon>Epsilonproteobacteria</taxon>
        <taxon>Campylobacterales</taxon>
        <taxon>Sulfurovaceae</taxon>
        <taxon>Sulfurovum</taxon>
    </lineage>
</organism>
<sequence>MRHKHGYRKLNRTSAHRAALLKNLSIALTKEGKIETTLPKAKELRSYYEKLITKAASGDFNAHRAIFAMLQHKESTNTIVNEIAPKYADRNGGYTRIIKTRMRKGDSAPMAIIELV</sequence>